<organism>
    <name type="scientific">Monkeypox virus (strain Zaire-96-I-16)</name>
    <name type="common">MPX</name>
    <dbReference type="NCBI Taxonomy" id="619591"/>
    <lineage>
        <taxon>Viruses</taxon>
        <taxon>Varidnaviria</taxon>
        <taxon>Bamfordvirae</taxon>
        <taxon>Nucleocytoviricota</taxon>
        <taxon>Pokkesviricetes</taxon>
        <taxon>Chitovirales</taxon>
        <taxon>Poxviridae</taxon>
        <taxon>Chordopoxvirinae</taxon>
        <taxon>Orthopoxvirus</taxon>
        <taxon>Monkeypox virus</taxon>
    </lineage>
</organism>
<gene>
    <name type="primary">VITF3L</name>
    <name type="ORF">A24R</name>
</gene>
<accession>Q8V4V4</accession>
<proteinExistence type="inferred from homology"/>
<feature type="chain" id="PRO_0000099188" description="Intermediate transcription factor 3 large subunit">
    <location>
        <begin position="1"/>
        <end position="382"/>
    </location>
</feature>
<name>VTF3L_MONPZ</name>
<dbReference type="EMBL" id="AF380138">
    <property type="protein sequence ID" value="AAL40592.1"/>
    <property type="molecule type" value="Genomic_DNA"/>
</dbReference>
<dbReference type="SMR" id="Q8V4V4"/>
<dbReference type="KEGG" id="vg:928978"/>
<dbReference type="Proteomes" id="UP000101269">
    <property type="component" value="Genome"/>
</dbReference>
<dbReference type="InterPro" id="IPR008789">
    <property type="entry name" value="Poxvirus_intermed-TF"/>
</dbReference>
<dbReference type="Pfam" id="PF05718">
    <property type="entry name" value="Pox_int_trans"/>
    <property type="match status" value="1"/>
</dbReference>
<comment type="function">
    <text evidence="1">Acts with RNA polymerase to initiate transcription from intermediate gene promoters.</text>
</comment>
<comment type="subunit">
    <text evidence="1">Heterodimer of a 45 kDa and a 32 kDa subunit.</text>
</comment>
<comment type="similarity">
    <text evidence="2">Belongs to the poxviruses A23 family.</text>
</comment>
<reference key="1">
    <citation type="journal article" date="2001" name="FEBS Lett.">
        <title>Human monkeypox and smallpox viruses: genomic comparison.</title>
        <authorList>
            <person name="Shchelkunov S.N."/>
            <person name="Totmenin A.V."/>
            <person name="Babkin I.V."/>
            <person name="Safronov P.F."/>
            <person name="Ryazankina O.I."/>
            <person name="Petrov N.A."/>
            <person name="Gutorov V.V."/>
            <person name="Uvarova E.A."/>
            <person name="Mikheev M.V."/>
            <person name="Sisler J.R."/>
            <person name="Esposito J.J."/>
            <person name="Jahrling P.B."/>
            <person name="Moss B."/>
            <person name="Sandakhchiev L.S."/>
        </authorList>
    </citation>
    <scope>NUCLEOTIDE SEQUENCE [LARGE SCALE GENOMIC DNA]</scope>
    <source>
        <strain>Zaire-96-I-16</strain>
    </source>
</reference>
<protein>
    <recommendedName>
        <fullName>Intermediate transcription factor 3 large subunit</fullName>
    </recommendedName>
    <alternativeName>
        <fullName>VITF-3 45 kDa subunit</fullName>
    </alternativeName>
</protein>
<keyword id="KW-0010">Activator</keyword>
<keyword id="KW-0804">Transcription</keyword>
<keyword id="KW-0805">Transcription regulation</keyword>
<evidence type="ECO:0000250" key="1"/>
<evidence type="ECO:0000305" key="2"/>
<sequence length="382" mass="44523">MDNLFTFLHEIEDRYARTIFNFHLISCDEIGDIYGLMKERISSEDMFDNIVYNKDIHPAIKKLVYCDIQLTKHIINQNTYPVFNDSSQVKCCHYFDINSDNSNISSRTVEIFESEKSSLVSYIKTTNKKRKVNYGEIKKTVHGGTNANYFSGKKSDEYLSTTVRSNINQPWIKTISKRMRVDIINHSIVTRGKSSILQTIEIIFTNRTCVKIFKDSTMHIILSKDKDEKGCINMIDKLFYVYYNLFLLFEDIIQNEYFKEVANVVNHVLMATALDEKLFLIKKMAEHDVYGVSNFKIGMFNLTFIKSLDHTVFPSLLDEDSKIKFFKGKKLNIVALRSLEDCTNYVTKSENMIEMMKERSTILNSIDIETESVDRLKELLLK</sequence>
<organismHost>
    <name type="scientific">Cynomys gunnisoni</name>
    <name type="common">Gunnison's prairie dog</name>
    <name type="synonym">Spermophilus gunnisoni</name>
    <dbReference type="NCBI Taxonomy" id="45479"/>
</organismHost>
<organismHost>
    <name type="scientific">Cynomys leucurus</name>
    <name type="common">White-tailed prairie dog</name>
    <dbReference type="NCBI Taxonomy" id="99825"/>
</organismHost>
<organismHost>
    <name type="scientific">Cynomys ludovicianus</name>
    <name type="common">Black-tailed prairie dog</name>
    <dbReference type="NCBI Taxonomy" id="45480"/>
</organismHost>
<organismHost>
    <name type="scientific">Cynomys mexicanus</name>
    <name type="common">Mexican prairie dog</name>
    <dbReference type="NCBI Taxonomy" id="99826"/>
</organismHost>
<organismHost>
    <name type="scientific">Cynomys parvidens</name>
    <name type="common">Utah prairie dog</name>
    <dbReference type="NCBI Taxonomy" id="99827"/>
</organismHost>
<organismHost>
    <name type="scientific">Gliridae</name>
    <name type="common">dormice</name>
    <dbReference type="NCBI Taxonomy" id="30650"/>
</organismHost>
<organismHost>
    <name type="scientific">Heliosciurus ruwenzorii</name>
    <name type="common">Ruwenzori sun squirrel</name>
    <dbReference type="NCBI Taxonomy" id="226685"/>
</organismHost>
<organismHost>
    <name type="scientific">Homo sapiens</name>
    <name type="common">Human</name>
    <dbReference type="NCBI Taxonomy" id="9606"/>
</organismHost>
<organismHost>
    <name type="scientific">Mus musculus</name>
    <name type="common">Mouse</name>
    <dbReference type="NCBI Taxonomy" id="10090"/>
</organismHost>